<feature type="chain" id="PRO_0000451489" description="Protein LATE ELONGATED HYPOCOTYL">
    <location>
        <begin position="1"/>
        <end position="770"/>
    </location>
</feature>
<feature type="domain" description="HTH myb-type" evidence="3">
    <location>
        <begin position="19"/>
        <end position="73"/>
    </location>
</feature>
<feature type="DNA-binding region" description="H-T-H motif" evidence="3">
    <location>
        <begin position="46"/>
        <end position="69"/>
    </location>
</feature>
<feature type="region of interest" description="Disordered" evidence="4">
    <location>
        <begin position="89"/>
        <end position="125"/>
    </location>
</feature>
<feature type="region of interest" description="Disordered" evidence="4">
    <location>
        <begin position="254"/>
        <end position="278"/>
    </location>
</feature>
<feature type="region of interest" description="Disordered" evidence="4">
    <location>
        <begin position="483"/>
        <end position="628"/>
    </location>
</feature>
<feature type="compositionally biased region" description="Basic and acidic residues" evidence="4">
    <location>
        <begin position="483"/>
        <end position="495"/>
    </location>
</feature>
<feature type="compositionally biased region" description="Polar residues" evidence="4">
    <location>
        <begin position="513"/>
        <end position="530"/>
    </location>
</feature>
<feature type="compositionally biased region" description="Basic and acidic residues" evidence="4">
    <location>
        <begin position="555"/>
        <end position="569"/>
    </location>
</feature>
<feature type="compositionally biased region" description="Polar residues" evidence="4">
    <location>
        <begin position="570"/>
        <end position="582"/>
    </location>
</feature>
<feature type="compositionally biased region" description="Basic and acidic residues" evidence="4">
    <location>
        <begin position="587"/>
        <end position="596"/>
    </location>
</feature>
<feature type="modified residue" description="Phosphoserine" evidence="1">
    <location>
        <position position="6"/>
    </location>
</feature>
<proteinExistence type="evidence at transcript level"/>
<protein>
    <recommendedName>
        <fullName evidence="6">Protein LATE ELONGATED HYPOCOTYL</fullName>
        <shortName evidence="6">PhLHY</shortName>
    </recommendedName>
</protein>
<sequence length="770" mass="84243">MDPYSSGEELVVKTRKPYTITKQRERWTEEEHNRFLEALKLYGRAWQRIEEHIGTKTAVQIRSHAQKFFTKLEKEALIKGVPISEALDIEIPPPRPKRKPSNPYPRKTSIAVPTSQVGTKDGKLSTPFPSICENRNLLDLEKEPIIESVGGNEKLSNVQENQNKKNFSQGFTLFKEGASAASVSLGKSSQTLAEPTDSCTLNESVSVSKGVINHDVANKSFPAVESKGHQQLDILDAKQSFQFDSSCNTSSVGKSCQSNEKWAQGEQKDQPSQPDHFEEFSRNDMQVPHNYPRHVPVHILDGTLGANGAQTTPDMFYHKSVSHQVGGLQGLSDMYTNPASSATSEQHSNAARSSIHQSFPCFHPIFTPIRDPDDYRSFLQLSSTFSSLVVSALLQNPAAHAAASFAASFWPYANMEAPVDSTGNNTASQINSAPSMAAIAAATVAAATAWWAAHGLLPLCSPFHSSLTCVPTSATSMQVDVCQPKEGKSEGREGTHNSPPHVQQPGPECSEALQEQHSASKLPTSPSSDSGESEGRNLKNGLTATDTEQGAAVTETHEPNAEKVRKQVDRSSCGSNTPSSSEVETDALEKDEKGKEEPEEPNVNLLAGDAANRRGRNCISNSNDSWKEVSEEGRMAFQALFSREVLPQSFSRSNYLKTKGNIDFEKFQQKPDEQGPSGSQLDLNDQASNICSSHQAVEENVQFLLGNKEGAEKCQPTMELGEIRLKARRTGFKPYKRCSLEAKDSRVANSSCQDEEKSCKRLRLEGEAST</sequence>
<reference key="1">
    <citation type="journal article" date="2015" name="Proc. Natl. Acad. Sci. U.S.A.">
        <title>Circadian clock gene LATE ELONGATED HYPOCOTYL directly regulates the timing of floral scent emission in Petunia.</title>
        <authorList>
            <person name="Fenske M.P."/>
            <person name="Hewett Hazelton K.D."/>
            <person name="Hempton A.K."/>
            <person name="Shim J.S."/>
            <person name="Yamamoto B.M."/>
            <person name="Riffell J.A."/>
            <person name="Imaizumi T."/>
        </authorList>
    </citation>
    <scope>NUCLEOTIDE SEQUENCE [MRNA]</scope>
    <scope>FUNCTION</scope>
    <scope>DISRUPTION PHENOTYPE</scope>
    <scope>INDUCTION</scope>
</reference>
<keyword id="KW-0090">Biological rhythms</keyword>
<keyword id="KW-0238">DNA-binding</keyword>
<keyword id="KW-0539">Nucleus</keyword>
<keyword id="KW-0597">Phosphoprotein</keyword>
<keyword id="KW-0678">Repressor</keyword>
<keyword id="KW-0804">Transcription</keyword>
<keyword id="KW-0805">Transcription regulation</keyword>
<comment type="function">
    <text evidence="5">Transcription repressor involved in the circadian clock (PubMed:26124104). Binds to the promoter region of target genes to repress their transcription (e.g. PRR5 and GI) (PubMed:26124104). Regulates the timing of floral scent, by restricting the expression of ODO1 and other floral volatile benzenoids and phenylpropanoids (FVBP) pathway genes (e.g. EPSPS and IGS1) to the evening (PubMed:26124104). This scent, mostly produced in the evening and night by the petals, attracts the pollinators (e.g. the night-active hawkmoth pollinator Manduca sexta) (PubMed:26124104). Binds to and repress ODO1 and FVBP genes (e.g. EPSPS and IGS1) promoters via cis-regulatory evening elements (PubMed:26124104).</text>
</comment>
<comment type="subunit">
    <text evidence="2">Homodimer.</text>
</comment>
<comment type="subcellular location">
    <subcellularLocation>
        <location evidence="3">Nucleus</location>
    </subcellularLocation>
</comment>
<comment type="induction">
    <text evidence="5">Circadian-regulation with peak levels occurring in the morning.</text>
</comment>
<comment type="disruption phenotype">
    <text evidence="5">Early production of scent at the end of the light period, associated with an early peak expression during the day of floral volatile benzenoids and phenylpropanoids (FVBP) pathway genes responsible for volatile precursor synthesis (e.g. EOBI, EOBII, ODO1, EPSPS, CM1, ADT, and PAL).</text>
</comment>
<gene>
    <name evidence="6" type="primary">LHY</name>
</gene>
<dbReference type="EMBL" id="KP017483">
    <property type="protein sequence ID" value="AKL88450.1"/>
    <property type="molecule type" value="mRNA"/>
</dbReference>
<dbReference type="SMR" id="A0A0G3VTN5"/>
<dbReference type="GO" id="GO:0005634">
    <property type="term" value="C:nucleus"/>
    <property type="evidence" value="ECO:0007669"/>
    <property type="project" value="UniProtKB-SubCell"/>
</dbReference>
<dbReference type="GO" id="GO:0000976">
    <property type="term" value="F:transcription cis-regulatory region binding"/>
    <property type="evidence" value="ECO:0000314"/>
    <property type="project" value="UniProtKB"/>
</dbReference>
<dbReference type="GO" id="GO:0007623">
    <property type="term" value="P:circadian rhythm"/>
    <property type="evidence" value="ECO:0000270"/>
    <property type="project" value="UniProtKB"/>
</dbReference>
<dbReference type="GO" id="GO:0010597">
    <property type="term" value="P:green leaf volatile biosynthetic process"/>
    <property type="evidence" value="ECO:0000315"/>
    <property type="project" value="UniProtKB"/>
</dbReference>
<dbReference type="GO" id="GO:0045892">
    <property type="term" value="P:negative regulation of DNA-templated transcription"/>
    <property type="evidence" value="ECO:0000315"/>
    <property type="project" value="UniProtKB"/>
</dbReference>
<dbReference type="GO" id="GO:0042752">
    <property type="term" value="P:regulation of circadian rhythm"/>
    <property type="evidence" value="ECO:0000315"/>
    <property type="project" value="UniProtKB"/>
</dbReference>
<dbReference type="CDD" id="cd00167">
    <property type="entry name" value="SANT"/>
    <property type="match status" value="1"/>
</dbReference>
<dbReference type="FunFam" id="1.10.10.60:FF:000023">
    <property type="entry name" value="protein REVEILLE 6 isoform X1"/>
    <property type="match status" value="1"/>
</dbReference>
<dbReference type="Gene3D" id="1.10.10.60">
    <property type="entry name" value="Homeodomain-like"/>
    <property type="match status" value="1"/>
</dbReference>
<dbReference type="InterPro" id="IPR009057">
    <property type="entry name" value="Homeodomain-like_sf"/>
</dbReference>
<dbReference type="InterPro" id="IPR017930">
    <property type="entry name" value="Myb_dom"/>
</dbReference>
<dbReference type="InterPro" id="IPR006447">
    <property type="entry name" value="Myb_dom_plants"/>
</dbReference>
<dbReference type="InterPro" id="IPR001005">
    <property type="entry name" value="SANT/Myb"/>
</dbReference>
<dbReference type="InterPro" id="IPR017884">
    <property type="entry name" value="SANT_dom"/>
</dbReference>
<dbReference type="NCBIfam" id="TIGR01557">
    <property type="entry name" value="myb_SHAQKYF"/>
    <property type="match status" value="1"/>
</dbReference>
<dbReference type="PANTHER" id="PTHR12802:SF177">
    <property type="entry name" value="PROTEIN CCA1"/>
    <property type="match status" value="1"/>
</dbReference>
<dbReference type="PANTHER" id="PTHR12802">
    <property type="entry name" value="SWI/SNF COMPLEX-RELATED"/>
    <property type="match status" value="1"/>
</dbReference>
<dbReference type="Pfam" id="PF00249">
    <property type="entry name" value="Myb_DNA-binding"/>
    <property type="match status" value="1"/>
</dbReference>
<dbReference type="SMART" id="SM00717">
    <property type="entry name" value="SANT"/>
    <property type="match status" value="1"/>
</dbReference>
<dbReference type="SUPFAM" id="SSF46689">
    <property type="entry name" value="Homeodomain-like"/>
    <property type="match status" value="1"/>
</dbReference>
<dbReference type="PROSITE" id="PS51294">
    <property type="entry name" value="HTH_MYB"/>
    <property type="match status" value="1"/>
</dbReference>
<accession>A0A0G3VTN5</accession>
<name>LHY_PETHY</name>
<evidence type="ECO:0000250" key="1">
    <source>
        <dbReference type="UniProtKB" id="P92973"/>
    </source>
</evidence>
<evidence type="ECO:0000250" key="2">
    <source>
        <dbReference type="UniProtKB" id="Q6R0H1"/>
    </source>
</evidence>
<evidence type="ECO:0000255" key="3">
    <source>
        <dbReference type="PROSITE-ProRule" id="PRU00625"/>
    </source>
</evidence>
<evidence type="ECO:0000256" key="4">
    <source>
        <dbReference type="SAM" id="MobiDB-lite"/>
    </source>
</evidence>
<evidence type="ECO:0000269" key="5">
    <source>
    </source>
</evidence>
<evidence type="ECO:0000303" key="6">
    <source>
    </source>
</evidence>
<organism>
    <name type="scientific">Petunia hybrida</name>
    <name type="common">Petunia</name>
    <dbReference type="NCBI Taxonomy" id="4102"/>
    <lineage>
        <taxon>Eukaryota</taxon>
        <taxon>Viridiplantae</taxon>
        <taxon>Streptophyta</taxon>
        <taxon>Embryophyta</taxon>
        <taxon>Tracheophyta</taxon>
        <taxon>Spermatophyta</taxon>
        <taxon>Magnoliopsida</taxon>
        <taxon>eudicotyledons</taxon>
        <taxon>Gunneridae</taxon>
        <taxon>Pentapetalae</taxon>
        <taxon>asterids</taxon>
        <taxon>lamiids</taxon>
        <taxon>Solanales</taxon>
        <taxon>Solanaceae</taxon>
        <taxon>Petunioideae</taxon>
        <taxon>Petunia</taxon>
    </lineage>
</organism>